<organism>
    <name type="scientific">Mycoplasmoides gallisepticum (strain R(low / passage 15 / clone 2))</name>
    <name type="common">Mycoplasma gallisepticum</name>
    <dbReference type="NCBI Taxonomy" id="710127"/>
    <lineage>
        <taxon>Bacteria</taxon>
        <taxon>Bacillati</taxon>
        <taxon>Mycoplasmatota</taxon>
        <taxon>Mycoplasmoidales</taxon>
        <taxon>Mycoplasmoidaceae</taxon>
        <taxon>Mycoplasmoides</taxon>
    </lineage>
</organism>
<accession>Q9RDV4</accession>
<proteinExistence type="inferred from homology"/>
<reference key="1">
    <citation type="journal article" date="2002" name="FEMS Microbiol. Lett.">
        <title>Mycoplasma gallisepticum rpoA gene cluster.</title>
        <authorList>
            <person name="Skamrov A.V."/>
            <person name="Feoktistova E.S."/>
            <person name="Gol'dman M.A."/>
            <person name="Bibilashvili R.S."/>
        </authorList>
    </citation>
    <scope>NUCLEOTIDE SEQUENCE [GENOMIC DNA]</scope>
    <source>
        <strain>A5969Var.B</strain>
    </source>
</reference>
<reference key="2">
    <citation type="journal article" date="2003" name="Microbiology">
        <title>The complete genome sequence of the avian pathogen Mycoplasma gallisepticum strain R(low).</title>
        <authorList>
            <person name="Papazisi L."/>
            <person name="Gorton T.S."/>
            <person name="Kutish G."/>
            <person name="Markham P.F."/>
            <person name="Browning G.F."/>
            <person name="Nguyen D.K."/>
            <person name="Swartzell S."/>
            <person name="Madan A."/>
            <person name="Mahairas G."/>
            <person name="Geary S.J."/>
        </authorList>
    </citation>
    <scope>NUCLEOTIDE SEQUENCE [LARGE SCALE GENOMIC DNA]</scope>
    <source>
        <strain>R(low / passage 15 / clone 2)</strain>
    </source>
</reference>
<comment type="similarity">
    <text evidence="1">Belongs to the bacterial ribosomal protein bS16 family.</text>
</comment>
<comment type="sequence caution" evidence="2">
    <conflict type="erroneous initiation">
        <sequence resource="EMBL-CDS" id="AAF19037"/>
    </conflict>
    <text>Truncated N-terminus.</text>
</comment>
<name>RS16_MYCGA</name>
<gene>
    <name evidence="1" type="primary">rpsP</name>
    <name evidence="1" type="synonym">rps16</name>
    <name type="ordered locus">MYCGA6260</name>
    <name type="ORF">MGA_0440</name>
</gene>
<dbReference type="EMBL" id="L35043">
    <property type="protein sequence ID" value="AAF19037.1"/>
    <property type="status" value="ALT_INIT"/>
    <property type="molecule type" value="Genomic_DNA"/>
</dbReference>
<dbReference type="EMBL" id="AE015450">
    <property type="protein sequence ID" value="AAP56976.2"/>
    <property type="molecule type" value="Genomic_DNA"/>
</dbReference>
<dbReference type="RefSeq" id="WP_011113885.1">
    <property type="nucleotide sequence ID" value="NC_004829.2"/>
</dbReference>
<dbReference type="SMR" id="Q9RDV4"/>
<dbReference type="KEGG" id="mga:MGA_0440"/>
<dbReference type="HOGENOM" id="CLU_100590_5_2_14"/>
<dbReference type="OrthoDB" id="9807878at2"/>
<dbReference type="Proteomes" id="UP000001418">
    <property type="component" value="Chromosome"/>
</dbReference>
<dbReference type="GO" id="GO:0005737">
    <property type="term" value="C:cytoplasm"/>
    <property type="evidence" value="ECO:0007669"/>
    <property type="project" value="UniProtKB-ARBA"/>
</dbReference>
<dbReference type="GO" id="GO:0015935">
    <property type="term" value="C:small ribosomal subunit"/>
    <property type="evidence" value="ECO:0007669"/>
    <property type="project" value="TreeGrafter"/>
</dbReference>
<dbReference type="GO" id="GO:0003735">
    <property type="term" value="F:structural constituent of ribosome"/>
    <property type="evidence" value="ECO:0007669"/>
    <property type="project" value="InterPro"/>
</dbReference>
<dbReference type="GO" id="GO:0006412">
    <property type="term" value="P:translation"/>
    <property type="evidence" value="ECO:0007669"/>
    <property type="project" value="UniProtKB-UniRule"/>
</dbReference>
<dbReference type="Gene3D" id="3.30.1320.10">
    <property type="match status" value="1"/>
</dbReference>
<dbReference type="HAMAP" id="MF_00385">
    <property type="entry name" value="Ribosomal_bS16"/>
    <property type="match status" value="1"/>
</dbReference>
<dbReference type="InterPro" id="IPR000307">
    <property type="entry name" value="Ribosomal_bS16"/>
</dbReference>
<dbReference type="InterPro" id="IPR023803">
    <property type="entry name" value="Ribosomal_bS16_dom_sf"/>
</dbReference>
<dbReference type="NCBIfam" id="TIGR00002">
    <property type="entry name" value="S16"/>
    <property type="match status" value="1"/>
</dbReference>
<dbReference type="PANTHER" id="PTHR12919">
    <property type="entry name" value="30S RIBOSOMAL PROTEIN S16"/>
    <property type="match status" value="1"/>
</dbReference>
<dbReference type="PANTHER" id="PTHR12919:SF20">
    <property type="entry name" value="SMALL RIBOSOMAL SUBUNIT PROTEIN BS16M"/>
    <property type="match status" value="1"/>
</dbReference>
<dbReference type="Pfam" id="PF00886">
    <property type="entry name" value="Ribosomal_S16"/>
    <property type="match status" value="1"/>
</dbReference>
<dbReference type="SUPFAM" id="SSF54565">
    <property type="entry name" value="Ribosomal protein S16"/>
    <property type="match status" value="1"/>
</dbReference>
<sequence length="86" mass="9689">MVKIRLMRLGRHKLPSYRMVVVDSRVKRDGSYIELIGHIDPINGTNKLNGALAIEWLKKGAQPTDTVKSILSKEGIWKQYAASKKA</sequence>
<feature type="chain" id="PRO_0000167205" description="Small ribosomal subunit protein bS16">
    <location>
        <begin position="1"/>
        <end position="86"/>
    </location>
</feature>
<feature type="sequence conflict" description="In Ref. 1; AAF19037." evidence="2" ref="1">
    <original>T</original>
    <variation>A</variation>
    <location>
        <position position="45"/>
    </location>
</feature>
<keyword id="KW-1185">Reference proteome</keyword>
<keyword id="KW-0687">Ribonucleoprotein</keyword>
<keyword id="KW-0689">Ribosomal protein</keyword>
<protein>
    <recommendedName>
        <fullName evidence="1">Small ribosomal subunit protein bS16</fullName>
    </recommendedName>
    <alternativeName>
        <fullName evidence="2">30S ribosomal protein S16</fullName>
    </alternativeName>
</protein>
<evidence type="ECO:0000255" key="1">
    <source>
        <dbReference type="HAMAP-Rule" id="MF_00385"/>
    </source>
</evidence>
<evidence type="ECO:0000305" key="2"/>